<name>VPS_HAEIN</name>
<dbReference type="EMBL" id="L42023">
    <property type="protein sequence ID" value="AAC23178.1"/>
    <property type="molecule type" value="Genomic_DNA"/>
</dbReference>
<dbReference type="PIR" id="I64034">
    <property type="entry name" value="I64034"/>
</dbReference>
<dbReference type="RefSeq" id="NP_439671.1">
    <property type="nucleotide sequence ID" value="NC_000907.1"/>
</dbReference>
<dbReference type="SMR" id="P44242"/>
<dbReference type="STRING" id="71421.HI_1522"/>
<dbReference type="EnsemblBacteria" id="AAC23178">
    <property type="protein sequence ID" value="AAC23178"/>
    <property type="gene ID" value="HI_1522"/>
</dbReference>
<dbReference type="KEGG" id="hin:HI_1522"/>
<dbReference type="PATRIC" id="fig|71421.8.peg.1593"/>
<dbReference type="eggNOG" id="COG5301">
    <property type="taxonomic scope" value="Bacteria"/>
</dbReference>
<dbReference type="HOGENOM" id="CLU_438546_0_0_6"/>
<dbReference type="OrthoDB" id="5691093at2"/>
<dbReference type="BioCyc" id="HINF71421:G1GJ1-1544-MONOMER"/>
<dbReference type="Proteomes" id="UP000000579">
    <property type="component" value="Chromosome"/>
</dbReference>
<sequence>MYHLDNDSGVSTFALAPVKSTQRLWFTEGGHGNAISYPGADWFNMVQAELFSILDDAGIQPDKGRLNQISLAIRKLSEGKVEDFSQQLKQADGYKYIGRCKSVAELRTIRPTENGQRILVDAYYEGSTAGGGEFVADLQDLITPDDGGTCFVVPNNGGRWKRLFSSSLQDTDFGVIGGVADDTTNLNAFLDALRTYKVKGYFTSRHYKTSAALNIAGVDIEGVLAGYKNKHGTRITGNGNHNIFEQMGGELQHITYSLKNFALSGGIVGLKMTYAVNAVVENVFIDNVERAFLLGDSQFVGPIWCSLKNCRGEGRISGLEIDGNKWANANMFETCFFKGDEFAGSITAKGGIGAVSNHFVNTEFAGKGVGVKLGKNKSTAFDNCYFESEGPSLLIEDSTADLALNNATFGSLTENNKTGKTSFIHHSLGTCNMSISSGYIYLAGNNQNNLAFIESDKPESLVVNMATPVKREIYTATGFKLFKNPDLPNKNSRVHYTSGYVCEFSSQNKNAELGNGDLTAYYNLNNSRCAVGLNLKIGSSTTKGTGQWQFRLPFQASGIGKYYLGQAIAIKADGSKLMTGVARIVGGSNQVVAYFNNVNPADATRPFEWTEGDRLDISIEYEI</sequence>
<reference key="1">
    <citation type="journal article" date="1995" name="Science">
        <title>Whole-genome random sequencing and assembly of Haemophilus influenzae Rd.</title>
        <authorList>
            <person name="Fleischmann R.D."/>
            <person name="Adams M.D."/>
            <person name="White O."/>
            <person name="Clayton R.A."/>
            <person name="Kirkness E.F."/>
            <person name="Kerlavage A.R."/>
            <person name="Bult C.J."/>
            <person name="Tomb J.-F."/>
            <person name="Dougherty B.A."/>
            <person name="Merrick J.M."/>
            <person name="McKenney K."/>
            <person name="Sutton G.G."/>
            <person name="FitzHugh W."/>
            <person name="Fields C.A."/>
            <person name="Gocayne J.D."/>
            <person name="Scott J.D."/>
            <person name="Shirley R."/>
            <person name="Liu L.-I."/>
            <person name="Glodek A."/>
            <person name="Kelley J.M."/>
            <person name="Weidman J.F."/>
            <person name="Phillips C.A."/>
            <person name="Spriggs T."/>
            <person name="Hedblom E."/>
            <person name="Cotton M.D."/>
            <person name="Utterback T.R."/>
            <person name="Hanna M.C."/>
            <person name="Nguyen D.T."/>
            <person name="Saudek D.M."/>
            <person name="Brandon R.C."/>
            <person name="Fine L.D."/>
            <person name="Fritchman J.L."/>
            <person name="Fuhrmann J.L."/>
            <person name="Geoghagen N.S.M."/>
            <person name="Gnehm C.L."/>
            <person name="McDonald L.A."/>
            <person name="Small K.V."/>
            <person name="Fraser C.M."/>
            <person name="Smith H.O."/>
            <person name="Venter J.C."/>
        </authorList>
    </citation>
    <scope>NUCLEOTIDE SEQUENCE [LARGE SCALE GENOMIC DNA]</scope>
    <source>
        <strain>ATCC 51907 / DSM 11121 / KW20 / Rd</strain>
    </source>
</reference>
<feature type="chain" id="PRO_0000077694" description="Mu-like prophage FluMu defective tail fiber protein">
    <location>
        <begin position="1"/>
        <end position="623"/>
    </location>
</feature>
<organism>
    <name type="scientific">Haemophilus influenzae (strain ATCC 51907 / DSM 11121 / KW20 / Rd)</name>
    <dbReference type="NCBI Taxonomy" id="71421"/>
    <lineage>
        <taxon>Bacteria</taxon>
        <taxon>Pseudomonadati</taxon>
        <taxon>Pseudomonadota</taxon>
        <taxon>Gammaproteobacteria</taxon>
        <taxon>Pasteurellales</taxon>
        <taxon>Pasteurellaceae</taxon>
        <taxon>Haemophilus</taxon>
    </lineage>
</organism>
<protein>
    <recommendedName>
        <fullName>Mu-like prophage FluMu defective tail fiber protein</fullName>
    </recommendedName>
</protein>
<accession>P44242</accession>
<comment type="similarity">
    <text evidence="1">To phage Mu protein S.</text>
</comment>
<evidence type="ECO:0000305" key="1"/>
<proteinExistence type="predicted"/>
<gene>
    <name type="ordered locus">HI_1522</name>
</gene>
<keyword id="KW-1185">Reference proteome</keyword>